<keyword id="KW-1003">Cell membrane</keyword>
<keyword id="KW-0472">Membrane</keyword>
<keyword id="KW-0812">Transmembrane</keyword>
<keyword id="KW-1133">Transmembrane helix</keyword>
<keyword id="KW-0813">Transport</keyword>
<organism>
    <name type="scientific">Helicobacter pylori (strain J99 / ATCC 700824)</name>
    <name type="common">Campylobacter pylori J99</name>
    <dbReference type="NCBI Taxonomy" id="85963"/>
    <lineage>
        <taxon>Bacteria</taxon>
        <taxon>Pseudomonadati</taxon>
        <taxon>Campylobacterota</taxon>
        <taxon>Epsilonproteobacteria</taxon>
        <taxon>Campylobacterales</taxon>
        <taxon>Helicobacteraceae</taxon>
        <taxon>Helicobacter</taxon>
    </lineage>
</organism>
<proteinExistence type="inferred from homology"/>
<reference key="1">
    <citation type="journal article" date="1999" name="Nature">
        <title>Genomic sequence comparison of two unrelated isolates of the human gastric pathogen Helicobacter pylori.</title>
        <authorList>
            <person name="Alm R.A."/>
            <person name="Ling L.-S.L."/>
            <person name="Moir D.T."/>
            <person name="King B.L."/>
            <person name="Brown E.D."/>
            <person name="Doig P.C."/>
            <person name="Smith D.R."/>
            <person name="Noonan B."/>
            <person name="Guild B.C."/>
            <person name="deJonge B.L."/>
            <person name="Carmel G."/>
            <person name="Tummino P.J."/>
            <person name="Caruso A."/>
            <person name="Uria-Nickelsen M."/>
            <person name="Mills D.M."/>
            <person name="Ives C."/>
            <person name="Gibson R."/>
            <person name="Merberg D."/>
            <person name="Mills S.D."/>
            <person name="Jiang Q."/>
            <person name="Taylor D.E."/>
            <person name="Vovis G.F."/>
            <person name="Trust T.J."/>
        </authorList>
    </citation>
    <scope>NUCLEOTIDE SEQUENCE [LARGE SCALE GENOMIC DNA]</scope>
    <source>
        <strain>J99 / ATCC 700824</strain>
    </source>
</reference>
<protein>
    <recommendedName>
        <fullName>Uncharacterized protein jhp_1250</fullName>
    </recommendedName>
</protein>
<name>YD30_HELPJ</name>
<comment type="subcellular location">
    <subcellularLocation>
        <location evidence="2">Cell membrane</location>
        <topology evidence="2">Multi-pass membrane protein</topology>
    </subcellularLocation>
</comment>
<comment type="similarity">
    <text evidence="2">Belongs to the AzlD/HI_1737/HP1330 family.</text>
</comment>
<gene>
    <name type="ordered locus">jhp_1250</name>
</gene>
<sequence>MLMHSILILLVIIITTYFTRIWPFMVFNSKNPPNDFVRYLGRALSCSVIGMLVVYCFKDIHVLKPPYGINEITAFLSVILLHRIFKVFVLSITLPTILYMVLVQSHALEKAFFNIHVS</sequence>
<evidence type="ECO:0000255" key="1"/>
<evidence type="ECO:0000305" key="2"/>
<dbReference type="EMBL" id="AE001439">
    <property type="protein sequence ID" value="AAD06823.1"/>
    <property type="molecule type" value="Genomic_DNA"/>
</dbReference>
<dbReference type="PIR" id="E71831">
    <property type="entry name" value="E71831"/>
</dbReference>
<dbReference type="RefSeq" id="WP_000928589.1">
    <property type="nucleotide sequence ID" value="NZ_CP011330.1"/>
</dbReference>
<dbReference type="KEGG" id="hpj:jhp_1250"/>
<dbReference type="PATRIC" id="fig|85963.30.peg.1321"/>
<dbReference type="eggNOG" id="COG1687">
    <property type="taxonomic scope" value="Bacteria"/>
</dbReference>
<dbReference type="Proteomes" id="UP000000804">
    <property type="component" value="Chromosome"/>
</dbReference>
<dbReference type="GO" id="GO:0005886">
    <property type="term" value="C:plasma membrane"/>
    <property type="evidence" value="ECO:0007669"/>
    <property type="project" value="UniProtKB-SubCell"/>
</dbReference>
<dbReference type="InterPro" id="IPR008407">
    <property type="entry name" value="Brnchd-chn_aa_trnsp_AzlD"/>
</dbReference>
<dbReference type="Pfam" id="PF05437">
    <property type="entry name" value="AzlD"/>
    <property type="match status" value="1"/>
</dbReference>
<dbReference type="PIRSF" id="PIRSF003203">
    <property type="entry name" value="AzlD"/>
    <property type="match status" value="1"/>
</dbReference>
<feature type="chain" id="PRO_0000128699" description="Uncharacterized protein jhp_1250">
    <location>
        <begin position="1"/>
        <end position="118"/>
    </location>
</feature>
<feature type="transmembrane region" description="Helical" evidence="1">
    <location>
        <begin position="6"/>
        <end position="26"/>
    </location>
</feature>
<feature type="transmembrane region" description="Helical" evidence="1">
    <location>
        <begin position="43"/>
        <end position="63"/>
    </location>
</feature>
<feature type="transmembrane region" description="Helical" evidence="1">
    <location>
        <begin position="84"/>
        <end position="104"/>
    </location>
</feature>
<accession>Q9ZJQ4</accession>